<feature type="chain" id="PRO_1000200554" description="UvrABC system protein B">
    <location>
        <begin position="1"/>
        <end position="662"/>
    </location>
</feature>
<feature type="domain" description="Helicase ATP-binding" evidence="1">
    <location>
        <begin position="31"/>
        <end position="188"/>
    </location>
</feature>
<feature type="domain" description="Helicase C-terminal" evidence="1">
    <location>
        <begin position="435"/>
        <end position="601"/>
    </location>
</feature>
<feature type="domain" description="UVR" evidence="1">
    <location>
        <begin position="626"/>
        <end position="661"/>
    </location>
</feature>
<feature type="short sequence motif" description="Beta-hairpin">
    <location>
        <begin position="97"/>
        <end position="120"/>
    </location>
</feature>
<feature type="binding site" evidence="1">
    <location>
        <begin position="44"/>
        <end position="51"/>
    </location>
    <ligand>
        <name>ATP</name>
        <dbReference type="ChEBI" id="CHEBI:30616"/>
    </ligand>
</feature>
<evidence type="ECO:0000255" key="1">
    <source>
        <dbReference type="HAMAP-Rule" id="MF_00204"/>
    </source>
</evidence>
<reference key="1">
    <citation type="journal article" date="2009" name="J. Bacteriol.">
        <title>Role of conjugative elements in the evolution of the multidrug-resistant pandemic clone Streptococcus pneumoniae Spain23F ST81.</title>
        <authorList>
            <person name="Croucher N.J."/>
            <person name="Walker D."/>
            <person name="Romero P."/>
            <person name="Lennard N."/>
            <person name="Paterson G.K."/>
            <person name="Bason N.C."/>
            <person name="Mitchell A.M."/>
            <person name="Quail M.A."/>
            <person name="Andrew P.W."/>
            <person name="Parkhill J."/>
            <person name="Bentley S.D."/>
            <person name="Mitchell T.J."/>
        </authorList>
    </citation>
    <scope>NUCLEOTIDE SEQUENCE [LARGE SCALE GENOMIC DNA]</scope>
    <source>
        <strain>ATCC 700669 / Spain 23F-1</strain>
    </source>
</reference>
<organism>
    <name type="scientific">Streptococcus pneumoniae (strain ATCC 700669 / Spain 23F-1)</name>
    <dbReference type="NCBI Taxonomy" id="561276"/>
    <lineage>
        <taxon>Bacteria</taxon>
        <taxon>Bacillati</taxon>
        <taxon>Bacillota</taxon>
        <taxon>Bacilli</taxon>
        <taxon>Lactobacillales</taxon>
        <taxon>Streptococcaceae</taxon>
        <taxon>Streptococcus</taxon>
    </lineage>
</organism>
<gene>
    <name evidence="1" type="primary">uvrB</name>
    <name type="ordered locus">SPN23F11340</name>
</gene>
<keyword id="KW-0067">ATP-binding</keyword>
<keyword id="KW-0963">Cytoplasm</keyword>
<keyword id="KW-0227">DNA damage</keyword>
<keyword id="KW-0228">DNA excision</keyword>
<keyword id="KW-0234">DNA repair</keyword>
<keyword id="KW-0267">Excision nuclease</keyword>
<keyword id="KW-0347">Helicase</keyword>
<keyword id="KW-0378">Hydrolase</keyword>
<keyword id="KW-0547">Nucleotide-binding</keyword>
<keyword id="KW-0742">SOS response</keyword>
<comment type="function">
    <text evidence="1">The UvrABC repair system catalyzes the recognition and processing of DNA lesions. A damage recognition complex composed of 2 UvrA and 2 UvrB subunits scans DNA for abnormalities. Upon binding of the UvrA(2)B(2) complex to a putative damaged site, the DNA wraps around one UvrB monomer. DNA wrap is dependent on ATP binding by UvrB and probably causes local melting of the DNA helix, facilitating insertion of UvrB beta-hairpin between the DNA strands. Then UvrB probes one DNA strand for the presence of a lesion. If a lesion is found the UvrA subunits dissociate and the UvrB-DNA preincision complex is formed. This complex is subsequently bound by UvrC and the second UvrB is released. If no lesion is found, the DNA wraps around the other UvrB subunit that will check the other stand for damage.</text>
</comment>
<comment type="subunit">
    <text evidence="1">Forms a heterotetramer with UvrA during the search for lesions. Interacts with UvrC in an incision complex.</text>
</comment>
<comment type="subcellular location">
    <subcellularLocation>
        <location evidence="1">Cytoplasm</location>
    </subcellularLocation>
</comment>
<comment type="domain">
    <text evidence="1">The beta-hairpin motif is involved in DNA binding.</text>
</comment>
<comment type="similarity">
    <text evidence="1">Belongs to the UvrB family.</text>
</comment>
<accession>B8ZJQ9</accession>
<sequence>MINHITDNQFKLVSKYQPSGDQPQAIEQLVDNIEGGEKAQILMGATGTGKTYTMSQVISKVNKPTLVIAHNKTLAGQLYGEFKEFFPENAVEYFVSYYDYYQPEAYVPSSDTYIEKDSSVNDEIDKLRHSATSALLERNDVIVVASVSCIYGLGSPKEYADSVVSLRPGLEISRDKLLNDLVDIQFERNDIDFQRGRFRVRGDVVEIFPASRDEHAFRVEFFGDEIDRIREVEALTGQVLGEVDHLAIFPATHFVTNDDHMEVAIAKIQAELEEQLAVFEKEGKLLEAQRLKQRTEYDIEMLREMGYTNGVENYSRHMDGRSEGEPPYTLLDFFPDDFLIMIDESHMTIGQIKGMYNGDRSRKEMLVNYGFRLPSALDNRPLRREEFESHVHQIVYVSATPGDYENEQTETVIEQIIRPTGLLDPEVEVRPTMGQIDDLLGEINARVEKNERTFITTLTKKMAEDLTDYFKEMGIKVKYMHSDIKTLERTEIIRDLRLGVFDVLVGINLLREGIDVPEVSLVAILDADKEGFLRNERGLIQTIGRAARNSEGHVIMYADTVTQSMQRAIDETARRRKIQMAYNEEHGIVPQTIKKEIRDLIAVTKAVAKEEDKEVDINSLNKQERKELVKKLEKQMQEAVEVLDFELAAQIRDMMLEVKALD</sequence>
<dbReference type="EMBL" id="FM211187">
    <property type="protein sequence ID" value="CAR68943.1"/>
    <property type="molecule type" value="Genomic_DNA"/>
</dbReference>
<dbReference type="RefSeq" id="WP_000607027.1">
    <property type="nucleotide sequence ID" value="NC_011900.1"/>
</dbReference>
<dbReference type="SMR" id="B8ZJQ9"/>
<dbReference type="KEGG" id="sne:SPN23F11340"/>
<dbReference type="HOGENOM" id="CLU_009621_2_1_9"/>
<dbReference type="GO" id="GO:0005737">
    <property type="term" value="C:cytoplasm"/>
    <property type="evidence" value="ECO:0007669"/>
    <property type="project" value="UniProtKB-SubCell"/>
</dbReference>
<dbReference type="GO" id="GO:0009380">
    <property type="term" value="C:excinuclease repair complex"/>
    <property type="evidence" value="ECO:0007669"/>
    <property type="project" value="InterPro"/>
</dbReference>
<dbReference type="GO" id="GO:0005524">
    <property type="term" value="F:ATP binding"/>
    <property type="evidence" value="ECO:0007669"/>
    <property type="project" value="UniProtKB-UniRule"/>
</dbReference>
<dbReference type="GO" id="GO:0016887">
    <property type="term" value="F:ATP hydrolysis activity"/>
    <property type="evidence" value="ECO:0007669"/>
    <property type="project" value="InterPro"/>
</dbReference>
<dbReference type="GO" id="GO:0003677">
    <property type="term" value="F:DNA binding"/>
    <property type="evidence" value="ECO:0007669"/>
    <property type="project" value="UniProtKB-UniRule"/>
</dbReference>
<dbReference type="GO" id="GO:0009381">
    <property type="term" value="F:excinuclease ABC activity"/>
    <property type="evidence" value="ECO:0007669"/>
    <property type="project" value="UniProtKB-UniRule"/>
</dbReference>
<dbReference type="GO" id="GO:0004386">
    <property type="term" value="F:helicase activity"/>
    <property type="evidence" value="ECO:0007669"/>
    <property type="project" value="UniProtKB-KW"/>
</dbReference>
<dbReference type="GO" id="GO:0006289">
    <property type="term" value="P:nucleotide-excision repair"/>
    <property type="evidence" value="ECO:0007669"/>
    <property type="project" value="UniProtKB-UniRule"/>
</dbReference>
<dbReference type="GO" id="GO:0009432">
    <property type="term" value="P:SOS response"/>
    <property type="evidence" value="ECO:0007669"/>
    <property type="project" value="UniProtKB-UniRule"/>
</dbReference>
<dbReference type="CDD" id="cd17916">
    <property type="entry name" value="DEXHc_UvrB"/>
    <property type="match status" value="1"/>
</dbReference>
<dbReference type="CDD" id="cd18790">
    <property type="entry name" value="SF2_C_UvrB"/>
    <property type="match status" value="1"/>
</dbReference>
<dbReference type="Gene3D" id="3.40.50.300">
    <property type="entry name" value="P-loop containing nucleotide triphosphate hydrolases"/>
    <property type="match status" value="3"/>
</dbReference>
<dbReference type="Gene3D" id="4.10.860.10">
    <property type="entry name" value="UVR domain"/>
    <property type="match status" value="1"/>
</dbReference>
<dbReference type="HAMAP" id="MF_00204">
    <property type="entry name" value="UvrB"/>
    <property type="match status" value="1"/>
</dbReference>
<dbReference type="InterPro" id="IPR006935">
    <property type="entry name" value="Helicase/UvrB_N"/>
</dbReference>
<dbReference type="InterPro" id="IPR014001">
    <property type="entry name" value="Helicase_ATP-bd"/>
</dbReference>
<dbReference type="InterPro" id="IPR001650">
    <property type="entry name" value="Helicase_C-like"/>
</dbReference>
<dbReference type="InterPro" id="IPR027417">
    <property type="entry name" value="P-loop_NTPase"/>
</dbReference>
<dbReference type="InterPro" id="IPR001943">
    <property type="entry name" value="UVR_dom"/>
</dbReference>
<dbReference type="InterPro" id="IPR036876">
    <property type="entry name" value="UVR_dom_sf"/>
</dbReference>
<dbReference type="InterPro" id="IPR004807">
    <property type="entry name" value="UvrB"/>
</dbReference>
<dbReference type="InterPro" id="IPR041471">
    <property type="entry name" value="UvrB_inter"/>
</dbReference>
<dbReference type="InterPro" id="IPR024759">
    <property type="entry name" value="UvrB_YAD/RRR_dom"/>
</dbReference>
<dbReference type="NCBIfam" id="NF003673">
    <property type="entry name" value="PRK05298.1"/>
    <property type="match status" value="1"/>
</dbReference>
<dbReference type="NCBIfam" id="TIGR00631">
    <property type="entry name" value="uvrb"/>
    <property type="match status" value="1"/>
</dbReference>
<dbReference type="PANTHER" id="PTHR24029">
    <property type="entry name" value="UVRABC SYSTEM PROTEIN B"/>
    <property type="match status" value="1"/>
</dbReference>
<dbReference type="PANTHER" id="PTHR24029:SF0">
    <property type="entry name" value="UVRABC SYSTEM PROTEIN B"/>
    <property type="match status" value="1"/>
</dbReference>
<dbReference type="Pfam" id="PF00271">
    <property type="entry name" value="Helicase_C"/>
    <property type="match status" value="1"/>
</dbReference>
<dbReference type="Pfam" id="PF04851">
    <property type="entry name" value="ResIII"/>
    <property type="match status" value="1"/>
</dbReference>
<dbReference type="Pfam" id="PF02151">
    <property type="entry name" value="UVR"/>
    <property type="match status" value="1"/>
</dbReference>
<dbReference type="Pfam" id="PF12344">
    <property type="entry name" value="UvrB"/>
    <property type="match status" value="1"/>
</dbReference>
<dbReference type="Pfam" id="PF17757">
    <property type="entry name" value="UvrB_inter"/>
    <property type="match status" value="1"/>
</dbReference>
<dbReference type="SMART" id="SM00487">
    <property type="entry name" value="DEXDc"/>
    <property type="match status" value="1"/>
</dbReference>
<dbReference type="SMART" id="SM00490">
    <property type="entry name" value="HELICc"/>
    <property type="match status" value="1"/>
</dbReference>
<dbReference type="SUPFAM" id="SSF46600">
    <property type="entry name" value="C-terminal UvrC-binding domain of UvrB"/>
    <property type="match status" value="1"/>
</dbReference>
<dbReference type="SUPFAM" id="SSF52540">
    <property type="entry name" value="P-loop containing nucleoside triphosphate hydrolases"/>
    <property type="match status" value="2"/>
</dbReference>
<dbReference type="PROSITE" id="PS51192">
    <property type="entry name" value="HELICASE_ATP_BIND_1"/>
    <property type="match status" value="1"/>
</dbReference>
<dbReference type="PROSITE" id="PS51194">
    <property type="entry name" value="HELICASE_CTER"/>
    <property type="match status" value="1"/>
</dbReference>
<dbReference type="PROSITE" id="PS50151">
    <property type="entry name" value="UVR"/>
    <property type="match status" value="1"/>
</dbReference>
<protein>
    <recommendedName>
        <fullName evidence="1">UvrABC system protein B</fullName>
        <shortName evidence="1">Protein UvrB</shortName>
    </recommendedName>
    <alternativeName>
        <fullName evidence="1">Excinuclease ABC subunit B</fullName>
    </alternativeName>
</protein>
<proteinExistence type="inferred from homology"/>
<name>UVRB_STRPJ</name>